<evidence type="ECO:0000255" key="1">
    <source>
        <dbReference type="HAMAP-Rule" id="MF_00385"/>
    </source>
</evidence>
<evidence type="ECO:0000305" key="2"/>
<keyword id="KW-1185">Reference proteome</keyword>
<keyword id="KW-0687">Ribonucleoprotein</keyword>
<keyword id="KW-0689">Ribosomal protein</keyword>
<proteinExistence type="inferred from homology"/>
<dbReference type="EMBL" id="AE017282">
    <property type="protein sequence ID" value="AAU90472.1"/>
    <property type="molecule type" value="Genomic_DNA"/>
</dbReference>
<dbReference type="RefSeq" id="WP_010959752.1">
    <property type="nucleotide sequence ID" value="NC_002977.6"/>
</dbReference>
<dbReference type="SMR" id="Q60BS3"/>
<dbReference type="STRING" id="243233.MCA0392"/>
<dbReference type="GeneID" id="88222734"/>
<dbReference type="KEGG" id="mca:MCA0392"/>
<dbReference type="eggNOG" id="COG0228">
    <property type="taxonomic scope" value="Bacteria"/>
</dbReference>
<dbReference type="HOGENOM" id="CLU_100590_5_1_6"/>
<dbReference type="Proteomes" id="UP000006821">
    <property type="component" value="Chromosome"/>
</dbReference>
<dbReference type="GO" id="GO:0005737">
    <property type="term" value="C:cytoplasm"/>
    <property type="evidence" value="ECO:0007669"/>
    <property type="project" value="UniProtKB-ARBA"/>
</dbReference>
<dbReference type="GO" id="GO:0015935">
    <property type="term" value="C:small ribosomal subunit"/>
    <property type="evidence" value="ECO:0007669"/>
    <property type="project" value="TreeGrafter"/>
</dbReference>
<dbReference type="GO" id="GO:0003735">
    <property type="term" value="F:structural constituent of ribosome"/>
    <property type="evidence" value="ECO:0007669"/>
    <property type="project" value="InterPro"/>
</dbReference>
<dbReference type="GO" id="GO:0006412">
    <property type="term" value="P:translation"/>
    <property type="evidence" value="ECO:0007669"/>
    <property type="project" value="UniProtKB-UniRule"/>
</dbReference>
<dbReference type="FunFam" id="3.30.1320.10:FF:000001">
    <property type="entry name" value="30S ribosomal protein S16"/>
    <property type="match status" value="1"/>
</dbReference>
<dbReference type="Gene3D" id="3.30.1320.10">
    <property type="match status" value="1"/>
</dbReference>
<dbReference type="HAMAP" id="MF_00385">
    <property type="entry name" value="Ribosomal_bS16"/>
    <property type="match status" value="1"/>
</dbReference>
<dbReference type="InterPro" id="IPR000307">
    <property type="entry name" value="Ribosomal_bS16"/>
</dbReference>
<dbReference type="InterPro" id="IPR020592">
    <property type="entry name" value="Ribosomal_bS16_CS"/>
</dbReference>
<dbReference type="InterPro" id="IPR023803">
    <property type="entry name" value="Ribosomal_bS16_dom_sf"/>
</dbReference>
<dbReference type="NCBIfam" id="TIGR00002">
    <property type="entry name" value="S16"/>
    <property type="match status" value="1"/>
</dbReference>
<dbReference type="PANTHER" id="PTHR12919">
    <property type="entry name" value="30S RIBOSOMAL PROTEIN S16"/>
    <property type="match status" value="1"/>
</dbReference>
<dbReference type="PANTHER" id="PTHR12919:SF20">
    <property type="entry name" value="SMALL RIBOSOMAL SUBUNIT PROTEIN BS16M"/>
    <property type="match status" value="1"/>
</dbReference>
<dbReference type="Pfam" id="PF00886">
    <property type="entry name" value="Ribosomal_S16"/>
    <property type="match status" value="1"/>
</dbReference>
<dbReference type="SUPFAM" id="SSF54565">
    <property type="entry name" value="Ribosomal protein S16"/>
    <property type="match status" value="1"/>
</dbReference>
<dbReference type="PROSITE" id="PS00732">
    <property type="entry name" value="RIBOSOMAL_S16"/>
    <property type="match status" value="1"/>
</dbReference>
<comment type="similarity">
    <text evidence="1">Belongs to the bacterial ribosomal protein bS16 family.</text>
</comment>
<organism>
    <name type="scientific">Methylococcus capsulatus (strain ATCC 33009 / NCIMB 11132 / Bath)</name>
    <dbReference type="NCBI Taxonomy" id="243233"/>
    <lineage>
        <taxon>Bacteria</taxon>
        <taxon>Pseudomonadati</taxon>
        <taxon>Pseudomonadota</taxon>
        <taxon>Gammaproteobacteria</taxon>
        <taxon>Methylococcales</taxon>
        <taxon>Methylococcaceae</taxon>
        <taxon>Methylococcus</taxon>
    </lineage>
</organism>
<sequence length="84" mass="9734">MVSIRLARGGAKKRPFYHVVVAESRSKRDGRYIERVGFFNPIARGQEERLRLDESRIAYWIGTGAKPSDRVVSLIKEFKKQQQV</sequence>
<reference key="1">
    <citation type="journal article" date="2004" name="PLoS Biol.">
        <title>Genomic insights into methanotrophy: the complete genome sequence of Methylococcus capsulatus (Bath).</title>
        <authorList>
            <person name="Ward N.L."/>
            <person name="Larsen O."/>
            <person name="Sakwa J."/>
            <person name="Bruseth L."/>
            <person name="Khouri H.M."/>
            <person name="Durkin A.S."/>
            <person name="Dimitrov G."/>
            <person name="Jiang L."/>
            <person name="Scanlan D."/>
            <person name="Kang K.H."/>
            <person name="Lewis M.R."/>
            <person name="Nelson K.E."/>
            <person name="Methe B.A."/>
            <person name="Wu M."/>
            <person name="Heidelberg J.F."/>
            <person name="Paulsen I.T."/>
            <person name="Fouts D.E."/>
            <person name="Ravel J."/>
            <person name="Tettelin H."/>
            <person name="Ren Q."/>
            <person name="Read T.D."/>
            <person name="DeBoy R.T."/>
            <person name="Seshadri R."/>
            <person name="Salzberg S.L."/>
            <person name="Jensen H.B."/>
            <person name="Birkeland N.K."/>
            <person name="Nelson W.C."/>
            <person name="Dodson R.J."/>
            <person name="Grindhaug S.H."/>
            <person name="Holt I.E."/>
            <person name="Eidhammer I."/>
            <person name="Jonasen I."/>
            <person name="Vanaken S."/>
            <person name="Utterback T.R."/>
            <person name="Feldblyum T.V."/>
            <person name="Fraser C.M."/>
            <person name="Lillehaug J.R."/>
            <person name="Eisen J.A."/>
        </authorList>
    </citation>
    <scope>NUCLEOTIDE SEQUENCE [LARGE SCALE GENOMIC DNA]</scope>
    <source>
        <strain>ATCC 33009 / NCIMB 11132 / Bath</strain>
    </source>
</reference>
<protein>
    <recommendedName>
        <fullName evidence="1">Small ribosomal subunit protein bS16</fullName>
    </recommendedName>
    <alternativeName>
        <fullName evidence="2">30S ribosomal protein S16</fullName>
    </alternativeName>
</protein>
<accession>Q60BS3</accession>
<feature type="chain" id="PRO_0000243825" description="Small ribosomal subunit protein bS16">
    <location>
        <begin position="1"/>
        <end position="84"/>
    </location>
</feature>
<gene>
    <name evidence="1" type="primary">rpsP</name>
    <name type="ordered locus">MCA0392</name>
</gene>
<name>RS16_METCA</name>